<name>CSPA_LISIN</name>
<gene>
    <name type="primary">cspLA</name>
    <name type="synonym">cspA</name>
    <name type="synonym">cspL</name>
    <name type="ordered locus">lin1401</name>
</gene>
<organism>
    <name type="scientific">Listeria innocua serovar 6a (strain ATCC BAA-680 / CLIP 11262)</name>
    <dbReference type="NCBI Taxonomy" id="272626"/>
    <lineage>
        <taxon>Bacteria</taxon>
        <taxon>Bacillati</taxon>
        <taxon>Bacillota</taxon>
        <taxon>Bacilli</taxon>
        <taxon>Bacillales</taxon>
        <taxon>Listeriaceae</taxon>
        <taxon>Listeria</taxon>
    </lineage>
</organism>
<accession>P0A356</accession>
<accession>Q48584</accession>
<accession>Q48770</accession>
<sequence length="66" mass="7266">MEQGTVKWFNAEKGFGFIERENGDDVFVHFSAIQGDGFKSLDEGQAVTFDVEEGQRGPQAANVQKA</sequence>
<comment type="subunit">
    <text evidence="1">Homodimer.</text>
</comment>
<comment type="subcellular location">
    <subcellularLocation>
        <location evidence="1">Cytoplasm</location>
    </subcellularLocation>
</comment>
<comment type="induction">
    <text evidence="1">In response to low temperature.</text>
</comment>
<protein>
    <recommendedName>
        <fullName>Cold shock-like protein CspLA</fullName>
        <shortName>CspL</shortName>
    </recommendedName>
</protein>
<proteinExistence type="inferred from homology"/>
<evidence type="ECO:0000250" key="1"/>
<feature type="chain" id="PRO_0000100307" description="Cold shock-like protein CspLA">
    <location>
        <begin position="1"/>
        <end position="66"/>
    </location>
</feature>
<feature type="domain" description="CSD">
    <location>
        <begin position="4"/>
        <end position="63"/>
    </location>
</feature>
<keyword id="KW-0010">Activator</keyword>
<keyword id="KW-0963">Cytoplasm</keyword>
<keyword id="KW-0238">DNA-binding</keyword>
<keyword id="KW-0346">Stress response</keyword>
<keyword id="KW-0804">Transcription</keyword>
<keyword id="KW-0805">Transcription regulation</keyword>
<reference key="1">
    <citation type="journal article" date="2001" name="Science">
        <title>Comparative genomics of Listeria species.</title>
        <authorList>
            <person name="Glaser P."/>
            <person name="Frangeul L."/>
            <person name="Buchrieser C."/>
            <person name="Rusniok C."/>
            <person name="Amend A."/>
            <person name="Baquero F."/>
            <person name="Berche P."/>
            <person name="Bloecker H."/>
            <person name="Brandt P."/>
            <person name="Chakraborty T."/>
            <person name="Charbit A."/>
            <person name="Chetouani F."/>
            <person name="Couve E."/>
            <person name="de Daruvar A."/>
            <person name="Dehoux P."/>
            <person name="Domann E."/>
            <person name="Dominguez-Bernal G."/>
            <person name="Duchaud E."/>
            <person name="Durant L."/>
            <person name="Dussurget O."/>
            <person name="Entian K.-D."/>
            <person name="Fsihi H."/>
            <person name="Garcia-del Portillo F."/>
            <person name="Garrido P."/>
            <person name="Gautier L."/>
            <person name="Goebel W."/>
            <person name="Gomez-Lopez N."/>
            <person name="Hain T."/>
            <person name="Hauf J."/>
            <person name="Jackson D."/>
            <person name="Jones L.-M."/>
            <person name="Kaerst U."/>
            <person name="Kreft J."/>
            <person name="Kuhn M."/>
            <person name="Kunst F."/>
            <person name="Kurapkat G."/>
            <person name="Madueno E."/>
            <person name="Maitournam A."/>
            <person name="Mata Vicente J."/>
            <person name="Ng E."/>
            <person name="Nedjari H."/>
            <person name="Nordsiek G."/>
            <person name="Novella S."/>
            <person name="de Pablos B."/>
            <person name="Perez-Diaz J.-C."/>
            <person name="Purcell R."/>
            <person name="Remmel B."/>
            <person name="Rose M."/>
            <person name="Schlueter T."/>
            <person name="Simoes N."/>
            <person name="Tierrez A."/>
            <person name="Vazquez-Boland J.-A."/>
            <person name="Voss H."/>
            <person name="Wehland J."/>
            <person name="Cossart P."/>
        </authorList>
    </citation>
    <scope>NUCLEOTIDE SEQUENCE [LARGE SCALE GENOMIC DNA]</scope>
    <source>
        <strain>ATCC BAA-680 / CLIP 11262</strain>
    </source>
</reference>
<reference key="2">
    <citation type="journal article" date="1997" name="J. Ind. Microbiol. Biotechnol.">
        <title>Detection and speciation of bacteria through PCR using universal major cold-shock protein primer oligomers.</title>
        <authorList>
            <person name="Francis K.P."/>
            <person name="Stewart G.S.A.B."/>
        </authorList>
    </citation>
    <scope>NUCLEOTIDE SEQUENCE [GENOMIC DNA] OF 12-56</scope>
    <source>
        <strain>ATCC 33090 / DSM 20649 / NCTC 11288 / Serovar 6a</strain>
    </source>
</reference>
<dbReference type="EMBL" id="AL596168">
    <property type="protein sequence ID" value="CAC96632.1"/>
    <property type="molecule type" value="Genomic_DNA"/>
</dbReference>
<dbReference type="EMBL" id="U60042">
    <property type="protein sequence ID" value="AAC80246.1"/>
    <property type="molecule type" value="Genomic_DNA"/>
</dbReference>
<dbReference type="PIR" id="AH1607">
    <property type="entry name" value="AH1607"/>
</dbReference>
<dbReference type="RefSeq" id="WP_003719639.1">
    <property type="nucleotide sequence ID" value="NC_003212.1"/>
</dbReference>
<dbReference type="BMRB" id="P0A356"/>
<dbReference type="SMR" id="P0A356"/>
<dbReference type="STRING" id="272626.gene:17565732"/>
<dbReference type="KEGG" id="lin:cspL"/>
<dbReference type="eggNOG" id="COG1278">
    <property type="taxonomic scope" value="Bacteria"/>
</dbReference>
<dbReference type="HOGENOM" id="CLU_117621_6_1_9"/>
<dbReference type="OrthoDB" id="9805039at2"/>
<dbReference type="Proteomes" id="UP000002513">
    <property type="component" value="Chromosome"/>
</dbReference>
<dbReference type="GO" id="GO:0005737">
    <property type="term" value="C:cytoplasm"/>
    <property type="evidence" value="ECO:0007669"/>
    <property type="project" value="UniProtKB-SubCell"/>
</dbReference>
<dbReference type="GO" id="GO:0003677">
    <property type="term" value="F:DNA binding"/>
    <property type="evidence" value="ECO:0007669"/>
    <property type="project" value="UniProtKB-KW"/>
</dbReference>
<dbReference type="CDD" id="cd04458">
    <property type="entry name" value="CSP_CDS"/>
    <property type="match status" value="1"/>
</dbReference>
<dbReference type="FunFam" id="2.40.50.140:FF:000006">
    <property type="entry name" value="Cold shock protein CspC"/>
    <property type="match status" value="1"/>
</dbReference>
<dbReference type="Gene3D" id="6.20.370.130">
    <property type="match status" value="1"/>
</dbReference>
<dbReference type="Gene3D" id="2.40.50.140">
    <property type="entry name" value="Nucleic acid-binding proteins"/>
    <property type="match status" value="1"/>
</dbReference>
<dbReference type="InterPro" id="IPR012156">
    <property type="entry name" value="Cold_shock_CspA"/>
</dbReference>
<dbReference type="InterPro" id="IPR050181">
    <property type="entry name" value="Cold_shock_domain"/>
</dbReference>
<dbReference type="InterPro" id="IPR011129">
    <property type="entry name" value="CSD"/>
</dbReference>
<dbReference type="InterPro" id="IPR019844">
    <property type="entry name" value="CSD_CS"/>
</dbReference>
<dbReference type="InterPro" id="IPR002059">
    <property type="entry name" value="CSP_DNA-bd"/>
</dbReference>
<dbReference type="InterPro" id="IPR012340">
    <property type="entry name" value="NA-bd_OB-fold"/>
</dbReference>
<dbReference type="PANTHER" id="PTHR11544">
    <property type="entry name" value="COLD SHOCK DOMAIN CONTAINING PROTEINS"/>
    <property type="match status" value="1"/>
</dbReference>
<dbReference type="Pfam" id="PF00313">
    <property type="entry name" value="CSD"/>
    <property type="match status" value="1"/>
</dbReference>
<dbReference type="PIRSF" id="PIRSF002599">
    <property type="entry name" value="Cold_shock_A"/>
    <property type="match status" value="1"/>
</dbReference>
<dbReference type="PRINTS" id="PR00050">
    <property type="entry name" value="COLDSHOCK"/>
</dbReference>
<dbReference type="SMART" id="SM00357">
    <property type="entry name" value="CSP"/>
    <property type="match status" value="1"/>
</dbReference>
<dbReference type="SUPFAM" id="SSF50249">
    <property type="entry name" value="Nucleic acid-binding proteins"/>
    <property type="match status" value="1"/>
</dbReference>
<dbReference type="PROSITE" id="PS00352">
    <property type="entry name" value="CSD_1"/>
    <property type="match status" value="1"/>
</dbReference>
<dbReference type="PROSITE" id="PS51857">
    <property type="entry name" value="CSD_2"/>
    <property type="match status" value="1"/>
</dbReference>